<evidence type="ECO:0000256" key="1">
    <source>
        <dbReference type="SAM" id="MobiDB-lite"/>
    </source>
</evidence>
<evidence type="ECO:0000305" key="2"/>
<reference key="1">
    <citation type="journal article" date="1999" name="J. Cell Sci.">
        <title>Caffeine can override the S-M checkpoint in fission yeast.</title>
        <authorList>
            <person name="Wang S.-W."/>
            <person name="Norbury C."/>
            <person name="Harris A.L."/>
            <person name="Toda T."/>
        </authorList>
    </citation>
    <scope>NUCLEOTIDE SEQUENCE [MRNA]</scope>
    <source>
        <strain>972 / ATCC 24843</strain>
    </source>
</reference>
<reference key="2">
    <citation type="journal article" date="2002" name="Nature">
        <title>The genome sequence of Schizosaccharomyces pombe.</title>
        <authorList>
            <person name="Wood V."/>
            <person name="Gwilliam R."/>
            <person name="Rajandream M.A."/>
            <person name="Lyne M.H."/>
            <person name="Lyne R."/>
            <person name="Stewart A."/>
            <person name="Sgouros J.G."/>
            <person name="Peat N."/>
            <person name="Hayles J."/>
            <person name="Baker S.G."/>
            <person name="Basham D."/>
            <person name="Bowman S."/>
            <person name="Brooks K."/>
            <person name="Brown D."/>
            <person name="Brown S."/>
            <person name="Chillingworth T."/>
            <person name="Churcher C.M."/>
            <person name="Collins M."/>
            <person name="Connor R."/>
            <person name="Cronin A."/>
            <person name="Davis P."/>
            <person name="Feltwell T."/>
            <person name="Fraser A."/>
            <person name="Gentles S."/>
            <person name="Goble A."/>
            <person name="Hamlin N."/>
            <person name="Harris D.E."/>
            <person name="Hidalgo J."/>
            <person name="Hodgson G."/>
            <person name="Holroyd S."/>
            <person name="Hornsby T."/>
            <person name="Howarth S."/>
            <person name="Huckle E.J."/>
            <person name="Hunt S."/>
            <person name="Jagels K."/>
            <person name="James K.D."/>
            <person name="Jones L."/>
            <person name="Jones M."/>
            <person name="Leather S."/>
            <person name="McDonald S."/>
            <person name="McLean J."/>
            <person name="Mooney P."/>
            <person name="Moule S."/>
            <person name="Mungall K.L."/>
            <person name="Murphy L.D."/>
            <person name="Niblett D."/>
            <person name="Odell C."/>
            <person name="Oliver K."/>
            <person name="O'Neil S."/>
            <person name="Pearson D."/>
            <person name="Quail M.A."/>
            <person name="Rabbinowitsch E."/>
            <person name="Rutherford K.M."/>
            <person name="Rutter S."/>
            <person name="Saunders D."/>
            <person name="Seeger K."/>
            <person name="Sharp S."/>
            <person name="Skelton J."/>
            <person name="Simmonds M.N."/>
            <person name="Squares R."/>
            <person name="Squares S."/>
            <person name="Stevens K."/>
            <person name="Taylor K."/>
            <person name="Taylor R.G."/>
            <person name="Tivey A."/>
            <person name="Walsh S.V."/>
            <person name="Warren T."/>
            <person name="Whitehead S."/>
            <person name="Woodward J.R."/>
            <person name="Volckaert G."/>
            <person name="Aert R."/>
            <person name="Robben J."/>
            <person name="Grymonprez B."/>
            <person name="Weltjens I."/>
            <person name="Vanstreels E."/>
            <person name="Rieger M."/>
            <person name="Schaefer M."/>
            <person name="Mueller-Auer S."/>
            <person name="Gabel C."/>
            <person name="Fuchs M."/>
            <person name="Duesterhoeft A."/>
            <person name="Fritzc C."/>
            <person name="Holzer E."/>
            <person name="Moestl D."/>
            <person name="Hilbert H."/>
            <person name="Borzym K."/>
            <person name="Langer I."/>
            <person name="Beck A."/>
            <person name="Lehrach H."/>
            <person name="Reinhardt R."/>
            <person name="Pohl T.M."/>
            <person name="Eger P."/>
            <person name="Zimmermann W."/>
            <person name="Wedler H."/>
            <person name="Wambutt R."/>
            <person name="Purnelle B."/>
            <person name="Goffeau A."/>
            <person name="Cadieu E."/>
            <person name="Dreano S."/>
            <person name="Gloux S."/>
            <person name="Lelaure V."/>
            <person name="Mottier S."/>
            <person name="Galibert F."/>
            <person name="Aves S.J."/>
            <person name="Xiang Z."/>
            <person name="Hunt C."/>
            <person name="Moore K."/>
            <person name="Hurst S.M."/>
            <person name="Lucas M."/>
            <person name="Rochet M."/>
            <person name="Gaillardin C."/>
            <person name="Tallada V.A."/>
            <person name="Garzon A."/>
            <person name="Thode G."/>
            <person name="Daga R.R."/>
            <person name="Cruzado L."/>
            <person name="Jimenez J."/>
            <person name="Sanchez M."/>
            <person name="del Rey F."/>
            <person name="Benito J."/>
            <person name="Dominguez A."/>
            <person name="Revuelta J.L."/>
            <person name="Moreno S."/>
            <person name="Armstrong J."/>
            <person name="Forsburg S.L."/>
            <person name="Cerutti L."/>
            <person name="Lowe T."/>
            <person name="McCombie W.R."/>
            <person name="Paulsen I."/>
            <person name="Potashkin J."/>
            <person name="Shpakovski G.V."/>
            <person name="Ussery D."/>
            <person name="Barrell B.G."/>
            <person name="Nurse P."/>
        </authorList>
    </citation>
    <scope>NUCLEOTIDE SEQUENCE [LARGE SCALE GENOMIC DNA]</scope>
    <source>
        <strain>972 / ATCC 24843</strain>
    </source>
</reference>
<comment type="similarity">
    <text evidence="2">Belongs to the MIX23 family.</text>
</comment>
<keyword id="KW-1185">Reference proteome</keyword>
<organism>
    <name type="scientific">Schizosaccharomyces pombe (strain 972 / ATCC 24843)</name>
    <name type="common">Fission yeast</name>
    <dbReference type="NCBI Taxonomy" id="284812"/>
    <lineage>
        <taxon>Eukaryota</taxon>
        <taxon>Fungi</taxon>
        <taxon>Dikarya</taxon>
        <taxon>Ascomycota</taxon>
        <taxon>Taphrinomycotina</taxon>
        <taxon>Schizosaccharomycetes</taxon>
        <taxon>Schizosaccharomycetales</taxon>
        <taxon>Schizosaccharomycetaceae</taxon>
        <taxon>Schizosaccharomyces</taxon>
    </lineage>
</organism>
<dbReference type="EMBL" id="AF105077">
    <property type="protein sequence ID" value="AAD16890.1"/>
    <property type="molecule type" value="mRNA"/>
</dbReference>
<dbReference type="EMBL" id="CU329672">
    <property type="protein sequence ID" value="CAA19335.1"/>
    <property type="molecule type" value="Genomic_DNA"/>
</dbReference>
<dbReference type="PIR" id="T41738">
    <property type="entry name" value="T41738"/>
</dbReference>
<dbReference type="RefSeq" id="NP_588163.1">
    <property type="nucleotide sequence ID" value="NM_001023152.2"/>
</dbReference>
<dbReference type="SMR" id="O74982"/>
<dbReference type="BioGRID" id="275370">
    <property type="interactions" value="6"/>
</dbReference>
<dbReference type="FunCoup" id="O74982">
    <property type="interactions" value="252"/>
</dbReference>
<dbReference type="STRING" id="284812.O74982"/>
<dbReference type="iPTMnet" id="O74982"/>
<dbReference type="PaxDb" id="4896-SPCC338.04.1"/>
<dbReference type="EnsemblFungi" id="SPCC338.04.1">
    <property type="protein sequence ID" value="SPCC338.04.1:pep"/>
    <property type="gene ID" value="SPCC338.04"/>
</dbReference>
<dbReference type="GeneID" id="2538789"/>
<dbReference type="KEGG" id="spo:2538789"/>
<dbReference type="PomBase" id="SPCC338.04">
    <property type="gene designation" value="cid2"/>
</dbReference>
<dbReference type="VEuPathDB" id="FungiDB:SPCC338.04"/>
<dbReference type="eggNOG" id="KOG4613">
    <property type="taxonomic scope" value="Eukaryota"/>
</dbReference>
<dbReference type="HOGENOM" id="CLU_1540990_0_0_1"/>
<dbReference type="InParanoid" id="O74982"/>
<dbReference type="OMA" id="AKWESPG"/>
<dbReference type="PhylomeDB" id="O74982"/>
<dbReference type="PRO" id="PR:O74982"/>
<dbReference type="Proteomes" id="UP000002485">
    <property type="component" value="Chromosome III"/>
</dbReference>
<dbReference type="GO" id="GO:0005758">
    <property type="term" value="C:mitochondrial intermembrane space"/>
    <property type="evidence" value="ECO:0000266"/>
    <property type="project" value="PomBase"/>
</dbReference>
<dbReference type="GO" id="GO:0005739">
    <property type="term" value="C:mitochondrion"/>
    <property type="evidence" value="ECO:0007005"/>
    <property type="project" value="PomBase"/>
</dbReference>
<dbReference type="GO" id="GO:0030150">
    <property type="term" value="P:protein import into mitochondrial matrix"/>
    <property type="evidence" value="ECO:0000266"/>
    <property type="project" value="PomBase"/>
</dbReference>
<dbReference type="InterPro" id="IPR019171">
    <property type="entry name" value="MIX23"/>
</dbReference>
<dbReference type="PANTHER" id="PTHR31905">
    <property type="entry name" value="COILED-COIL DOMAIN-CONTAINING PROTEIN 58"/>
    <property type="match status" value="1"/>
</dbReference>
<dbReference type="PANTHER" id="PTHR31905:SF2">
    <property type="entry name" value="PROTEIN MIX23"/>
    <property type="match status" value="1"/>
</dbReference>
<dbReference type="Pfam" id="PF09774">
    <property type="entry name" value="MIX23"/>
    <property type="match status" value="1"/>
</dbReference>
<sequence>MNEEKRGLCMNIRYLKNVLRKARKIDDTIQLSLNSAKWEYPEGKVHETQEERCQNVKKKLFEGWLSRDQFLKECQTIVRSQLDQDRNTSKSPLKSQQQLPSSSTTQVSERLDPYAKEVQVQLSPPEEVQIVLQSELSVEQIIRDQTWEVLTNACPGMFKDWRDTYKD</sequence>
<proteinExistence type="evidence at transcript level"/>
<accession>O74982</accession>
<feature type="chain" id="PRO_0000089748" description="Protein MIX23">
    <location>
        <begin position="1"/>
        <end position="167"/>
    </location>
</feature>
<feature type="region of interest" description="Disordered" evidence="1">
    <location>
        <begin position="81"/>
        <end position="108"/>
    </location>
</feature>
<feature type="compositionally biased region" description="Low complexity" evidence="1">
    <location>
        <begin position="89"/>
        <end position="106"/>
    </location>
</feature>
<name>CID2_SCHPO</name>
<gene>
    <name type="primary">cid2</name>
    <name type="ORF">SPCC338.04</name>
</gene>
<protein>
    <recommendedName>
        <fullName evidence="2">Protein MIX23</fullName>
    </recommendedName>
    <alternativeName>
        <fullName>Caffeine-induced death protein 2</fullName>
    </alternativeName>
</protein>